<gene>
    <name type="primary">Lrch2</name>
    <name type="synonym">Kiaa1495</name>
</gene>
<sequence>MAASQGGGGNSGGGGCSGGGSGGGGGAAGGGGGGGGGGGGGAGAGGGGGCGGTVAVPIPVPTLFGQPFPNGPQWHPGSLQPQHTVRSLDRALEEAGNSGILSLSGRKLREFPGSGYDLTDTTQADLSRNRFTEIPSDVWLFAPLETLNLYHNCIKTIPEAIKNLQMLTYLNISRNLLSTLPKYLFDLPLKVLVVSNNKLVSIPEEIGKLKDLMELDVSCNEIQVLPQQMGKLHSLKELNIRRNNLHVLPDELGDLPLVKLDFSCNKVTEIPVCYRKLHHLQVIILDNNPLQVPPAQICLKGKVHIFKYLNIQACCRMDKKPDSLDLPSLNKRMPSQPLTDSMEDFYPNKNHGPDSGIGSDNGEKRLSTTEPSDDDTISLHSQVSESNREQTSRNDSHITGSKPDSQKDQEVYDFIDPNTEDVAVPEEGDTHIGSFVSFLKGKEKSSEKSQKNEEPPNEKKVDKEQLLPEEEDDDLKEVTDLRKIAAQLLKQEQKNRILNHSTSVMRNKLKQTVECEKSVPADEGNSPLSPLAWQPLENQKDQIVDQQWPESQPIIWQNEERRRSKQIRKEYFKYKSTRKNSSGNENEEQESDNAHMSAQSPVSSEEYDRSDGFSHGPFGLKPRSAFSRASRQEYGAADPGFTMRRKMEHLREEREQIRQLRNNLESRLKVILPDDIGAALMDGVVLCHLANHIRPRSVASIHVPSPAVPKLSMAKCRRNVENFLDACKKLGVSQERLCLPHHILEERGLVKVGVTVQALLELPTTKASQLSMA</sequence>
<proteinExistence type="evidence at transcript level"/>
<name>LRCH2_MOUSE</name>
<accession>Q3UMG5</accession>
<accession>A2AMN8</accession>
<accession>Q7TNP9</accession>
<accession>Q80TC9</accession>
<keyword id="KW-0025">Alternative splicing</keyword>
<keyword id="KW-0433">Leucine-rich repeat</keyword>
<keyword id="KW-1185">Reference proteome</keyword>
<keyword id="KW-0677">Repeat</keyword>
<protein>
    <recommendedName>
        <fullName>Leucine-rich repeat and calponin homology domain-containing protein 2</fullName>
    </recommendedName>
</protein>
<dbReference type="EMBL" id="AL671981">
    <property type="protein sequence ID" value="CAM22136.1"/>
    <property type="status" value="ALT_INIT"/>
    <property type="molecule type" value="Genomic_DNA"/>
</dbReference>
<dbReference type="EMBL" id="AL807780">
    <property type="protein sequence ID" value="CAM22136.1"/>
    <property type="status" value="JOINED"/>
    <property type="molecule type" value="Genomic_DNA"/>
</dbReference>
<dbReference type="EMBL" id="AL807780">
    <property type="protein sequence ID" value="CAM24878.1"/>
    <property type="status" value="ALT_INIT"/>
    <property type="molecule type" value="Genomic_DNA"/>
</dbReference>
<dbReference type="EMBL" id="AL671981">
    <property type="protein sequence ID" value="CAM24878.1"/>
    <property type="status" value="JOINED"/>
    <property type="molecule type" value="Genomic_DNA"/>
</dbReference>
<dbReference type="EMBL" id="AK144916">
    <property type="protein sequence ID" value="BAE26133.1"/>
    <property type="molecule type" value="mRNA"/>
</dbReference>
<dbReference type="EMBL" id="BC056180">
    <property type="protein sequence ID" value="AAH56180.2"/>
    <property type="molecule type" value="mRNA"/>
</dbReference>
<dbReference type="EMBL" id="AK122516">
    <property type="protein sequence ID" value="BAC65798.1"/>
    <property type="status" value="ALT_SEQ"/>
    <property type="molecule type" value="mRNA"/>
</dbReference>
<dbReference type="CCDS" id="CCDS41160.1">
    <molecule id="Q3UMG5-1"/>
</dbReference>
<dbReference type="RefSeq" id="NP_001074642.1">
    <molecule id="Q3UMG5-1"/>
    <property type="nucleotide sequence ID" value="NM_001081173.3"/>
</dbReference>
<dbReference type="RefSeq" id="NP_001390508.1">
    <molecule id="Q3UMG5-2"/>
    <property type="nucleotide sequence ID" value="NM_001403579.1"/>
</dbReference>
<dbReference type="RefSeq" id="XP_006528853.2">
    <property type="nucleotide sequence ID" value="XM_006528790.3"/>
</dbReference>
<dbReference type="RefSeq" id="XP_006528854.2">
    <property type="nucleotide sequence ID" value="XM_006528791.3"/>
</dbReference>
<dbReference type="SMR" id="Q3UMG5"/>
<dbReference type="BioGRID" id="229146">
    <property type="interactions" value="5"/>
</dbReference>
<dbReference type="FunCoup" id="Q3UMG5">
    <property type="interactions" value="221"/>
</dbReference>
<dbReference type="IntAct" id="Q3UMG5">
    <property type="interactions" value="2"/>
</dbReference>
<dbReference type="STRING" id="10090.ENSMUSP00000108438"/>
<dbReference type="iPTMnet" id="Q3UMG5"/>
<dbReference type="PhosphoSitePlus" id="Q3UMG5"/>
<dbReference type="jPOST" id="Q3UMG5"/>
<dbReference type="PaxDb" id="10090-ENSMUSP00000123633"/>
<dbReference type="ProteomicsDB" id="292359">
    <molecule id="Q3UMG5-1"/>
</dbReference>
<dbReference type="ProteomicsDB" id="292360">
    <molecule id="Q3UMG5-2"/>
</dbReference>
<dbReference type="ProteomicsDB" id="292361">
    <molecule id="Q3UMG5-3"/>
</dbReference>
<dbReference type="Pumba" id="Q3UMG5"/>
<dbReference type="Antibodypedia" id="517">
    <property type="antibodies" value="48 antibodies from 15 providers"/>
</dbReference>
<dbReference type="Ensembl" id="ENSMUST00000112819.9">
    <molecule id="Q3UMG5-1"/>
    <property type="protein sequence ID" value="ENSMUSP00000108438.3"/>
    <property type="gene ID" value="ENSMUSG00000031290.15"/>
</dbReference>
<dbReference type="GeneID" id="210297"/>
<dbReference type="KEGG" id="mmu:210297"/>
<dbReference type="UCSC" id="uc009unk.1">
    <molecule id="Q3UMG5-1"/>
    <property type="organism name" value="mouse"/>
</dbReference>
<dbReference type="AGR" id="MGI:2147870"/>
<dbReference type="CTD" id="57631"/>
<dbReference type="MGI" id="MGI:2147870">
    <property type="gene designation" value="Lrch2"/>
</dbReference>
<dbReference type="VEuPathDB" id="HostDB:ENSMUSG00000031290"/>
<dbReference type="eggNOG" id="KOG0532">
    <property type="taxonomic scope" value="Eukaryota"/>
</dbReference>
<dbReference type="GeneTree" id="ENSGT00940000160039"/>
<dbReference type="HOGENOM" id="CLU_008231_1_0_1"/>
<dbReference type="InParanoid" id="Q3UMG5"/>
<dbReference type="OMA" id="TMECEKS"/>
<dbReference type="PhylomeDB" id="Q3UMG5"/>
<dbReference type="BioGRID-ORCS" id="210297">
    <property type="hits" value="1 hit in 78 CRISPR screens"/>
</dbReference>
<dbReference type="ChiTaRS" id="Lrch2">
    <property type="organism name" value="mouse"/>
</dbReference>
<dbReference type="PRO" id="PR:Q3UMG5"/>
<dbReference type="Proteomes" id="UP000000589">
    <property type="component" value="Chromosome X"/>
</dbReference>
<dbReference type="RNAct" id="Q3UMG5">
    <property type="molecule type" value="protein"/>
</dbReference>
<dbReference type="Bgee" id="ENSMUSG00000031290">
    <property type="expression patterns" value="Expressed in cortical plate and 175 other cell types or tissues"/>
</dbReference>
<dbReference type="ExpressionAtlas" id="Q3UMG5">
    <property type="expression patterns" value="baseline and differential"/>
</dbReference>
<dbReference type="CDD" id="cd21271">
    <property type="entry name" value="CH_LRCH2"/>
    <property type="match status" value="1"/>
</dbReference>
<dbReference type="FunFam" id="1.10.418.10:FF:000021">
    <property type="entry name" value="Leucine-rich repeat and calponin homology domain-containing protein 1 isoform 3"/>
    <property type="match status" value="1"/>
</dbReference>
<dbReference type="FunFam" id="3.80.10.10:FF:000007">
    <property type="entry name" value="Leucine-rich repeat and calponin homology domain-containing protein 1 isoform 3"/>
    <property type="match status" value="1"/>
</dbReference>
<dbReference type="Gene3D" id="1.10.418.10">
    <property type="entry name" value="Calponin-like domain"/>
    <property type="match status" value="1"/>
</dbReference>
<dbReference type="Gene3D" id="3.80.10.10">
    <property type="entry name" value="Ribonuclease Inhibitor"/>
    <property type="match status" value="1"/>
</dbReference>
<dbReference type="InterPro" id="IPR001715">
    <property type="entry name" value="CH_dom"/>
</dbReference>
<dbReference type="InterPro" id="IPR036872">
    <property type="entry name" value="CH_dom_sf"/>
</dbReference>
<dbReference type="InterPro" id="IPR001611">
    <property type="entry name" value="Leu-rich_rpt"/>
</dbReference>
<dbReference type="InterPro" id="IPR003591">
    <property type="entry name" value="Leu-rich_rpt_typical-subtyp"/>
</dbReference>
<dbReference type="InterPro" id="IPR032675">
    <property type="entry name" value="LRR_dom_sf"/>
</dbReference>
<dbReference type="InterPro" id="IPR050216">
    <property type="entry name" value="LRR_domain-containing"/>
</dbReference>
<dbReference type="PANTHER" id="PTHR48051">
    <property type="match status" value="1"/>
</dbReference>
<dbReference type="PANTHER" id="PTHR48051:SF14">
    <property type="entry name" value="LEUCINE-RICH REPEAT AND CALPONIN HOMOLOGY DOMAIN-CONTAINING PROTEIN 2 ISOFORM X1"/>
    <property type="match status" value="1"/>
</dbReference>
<dbReference type="Pfam" id="PF00307">
    <property type="entry name" value="CH"/>
    <property type="match status" value="1"/>
</dbReference>
<dbReference type="Pfam" id="PF13855">
    <property type="entry name" value="LRR_8"/>
    <property type="match status" value="2"/>
</dbReference>
<dbReference type="SMART" id="SM00033">
    <property type="entry name" value="CH"/>
    <property type="match status" value="1"/>
</dbReference>
<dbReference type="SMART" id="SM00364">
    <property type="entry name" value="LRR_BAC"/>
    <property type="match status" value="4"/>
</dbReference>
<dbReference type="SMART" id="SM00369">
    <property type="entry name" value="LRR_TYP"/>
    <property type="match status" value="5"/>
</dbReference>
<dbReference type="SUPFAM" id="SSF47576">
    <property type="entry name" value="Calponin-homology domain, CH-domain"/>
    <property type="match status" value="1"/>
</dbReference>
<dbReference type="SUPFAM" id="SSF52058">
    <property type="entry name" value="L domain-like"/>
    <property type="match status" value="1"/>
</dbReference>
<dbReference type="PROSITE" id="PS50021">
    <property type="entry name" value="CH"/>
    <property type="match status" value="1"/>
</dbReference>
<dbReference type="PROSITE" id="PS51450">
    <property type="entry name" value="LRR"/>
    <property type="match status" value="8"/>
</dbReference>
<comment type="function">
    <text evidence="1 2">May play a role in the organization of the cytoskeleton.</text>
</comment>
<comment type="alternative products">
    <event type="alternative splicing"/>
    <isoform>
        <id>Q3UMG5-1</id>
        <name>1</name>
        <sequence type="displayed"/>
    </isoform>
    <isoform>
        <id>Q3UMG5-2</id>
        <name>2</name>
        <sequence type="described" ref="VSP_021041"/>
    </isoform>
    <isoform>
        <id>Q3UMG5-3</id>
        <name>3</name>
        <sequence type="described" ref="VSP_021042"/>
    </isoform>
</comment>
<comment type="sequence caution" evidence="7">
    <conflict type="miscellaneous discrepancy">
        <sequence resource="EMBL-CDS" id="BAC65798"/>
    </conflict>
    <text>Intron retention.</text>
</comment>
<comment type="sequence caution" evidence="7">
    <conflict type="erroneous initiation">
        <sequence resource="EMBL-CDS" id="CAM22136"/>
    </conflict>
</comment>
<comment type="sequence caution" evidence="7">
    <conflict type="erroneous initiation">
        <sequence resource="EMBL-CDS" id="CAM24878"/>
    </conflict>
</comment>
<feature type="chain" id="PRO_0000253483" description="Leucine-rich repeat and calponin homology domain-containing protein 2">
    <location>
        <begin position="1"/>
        <end position="773"/>
    </location>
</feature>
<feature type="repeat" description="LRR 1">
    <location>
        <begin position="97"/>
        <end position="118"/>
    </location>
</feature>
<feature type="repeat" description="LRR 2">
    <location>
        <begin position="120"/>
        <end position="141"/>
    </location>
</feature>
<feature type="repeat" description="LRR 3">
    <location>
        <begin position="143"/>
        <end position="164"/>
    </location>
</feature>
<feature type="repeat" description="LRR 4">
    <location>
        <begin position="166"/>
        <end position="187"/>
    </location>
</feature>
<feature type="repeat" description="LRR 5">
    <location>
        <begin position="188"/>
        <end position="209"/>
    </location>
</feature>
<feature type="repeat" description="LRR 6">
    <location>
        <begin position="211"/>
        <end position="232"/>
    </location>
</feature>
<feature type="repeat" description="LRR 7">
    <location>
        <begin position="234"/>
        <end position="256"/>
    </location>
</feature>
<feature type="repeat" description="LRR 8">
    <location>
        <begin position="257"/>
        <end position="277"/>
    </location>
</feature>
<feature type="repeat" description="LRR 9">
    <location>
        <begin position="279"/>
        <end position="300"/>
    </location>
</feature>
<feature type="domain" description="Calponin-homology (CH)" evidence="3">
    <location>
        <begin position="650"/>
        <end position="763"/>
    </location>
</feature>
<feature type="region of interest" description="Disordered" evidence="4">
    <location>
        <begin position="1"/>
        <end position="46"/>
    </location>
</feature>
<feature type="region of interest" description="Disordered" evidence="4">
    <location>
        <begin position="324"/>
        <end position="409"/>
    </location>
</feature>
<feature type="region of interest" description="Disordered" evidence="4">
    <location>
        <begin position="438"/>
        <end position="478"/>
    </location>
</feature>
<feature type="region of interest" description="Disordered" evidence="4">
    <location>
        <begin position="573"/>
        <end position="633"/>
    </location>
</feature>
<feature type="compositionally biased region" description="Basic and acidic residues" evidence="4">
    <location>
        <begin position="386"/>
        <end position="396"/>
    </location>
</feature>
<feature type="compositionally biased region" description="Basic and acidic residues" evidence="4">
    <location>
        <begin position="440"/>
        <end position="466"/>
    </location>
</feature>
<feature type="compositionally biased region" description="Polar residues" evidence="4">
    <location>
        <begin position="594"/>
        <end position="603"/>
    </location>
</feature>
<feature type="splice variant" id="VSP_021041" description="In isoform 2." evidence="6">
    <location>
        <begin position="496"/>
        <end position="517"/>
    </location>
</feature>
<feature type="splice variant" id="VSP_021042" description="In isoform 3." evidence="5">
    <location>
        <begin position="589"/>
        <end position="605"/>
    </location>
</feature>
<feature type="sequence conflict" description="In Ref. 2; BAE26133." evidence="7" ref="2">
    <original>P</original>
    <variation>L</variation>
    <location>
        <position position="455"/>
    </location>
</feature>
<evidence type="ECO:0000250" key="1">
    <source>
        <dbReference type="UniProtKB" id="Q960C5"/>
    </source>
</evidence>
<evidence type="ECO:0000250" key="2">
    <source>
        <dbReference type="UniProtKB" id="Q96II8"/>
    </source>
</evidence>
<evidence type="ECO:0000255" key="3">
    <source>
        <dbReference type="PROSITE-ProRule" id="PRU00044"/>
    </source>
</evidence>
<evidence type="ECO:0000256" key="4">
    <source>
        <dbReference type="SAM" id="MobiDB-lite"/>
    </source>
</evidence>
<evidence type="ECO:0000303" key="5">
    <source>
    </source>
</evidence>
<evidence type="ECO:0000303" key="6">
    <source>
    </source>
</evidence>
<evidence type="ECO:0000305" key="7"/>
<organism>
    <name type="scientific">Mus musculus</name>
    <name type="common">Mouse</name>
    <dbReference type="NCBI Taxonomy" id="10090"/>
    <lineage>
        <taxon>Eukaryota</taxon>
        <taxon>Metazoa</taxon>
        <taxon>Chordata</taxon>
        <taxon>Craniata</taxon>
        <taxon>Vertebrata</taxon>
        <taxon>Euteleostomi</taxon>
        <taxon>Mammalia</taxon>
        <taxon>Eutheria</taxon>
        <taxon>Euarchontoglires</taxon>
        <taxon>Glires</taxon>
        <taxon>Rodentia</taxon>
        <taxon>Myomorpha</taxon>
        <taxon>Muroidea</taxon>
        <taxon>Muridae</taxon>
        <taxon>Murinae</taxon>
        <taxon>Mus</taxon>
        <taxon>Mus</taxon>
    </lineage>
</organism>
<reference key="1">
    <citation type="journal article" date="2009" name="PLoS Biol.">
        <title>Lineage-specific biology revealed by a finished genome assembly of the mouse.</title>
        <authorList>
            <person name="Church D.M."/>
            <person name="Goodstadt L."/>
            <person name="Hillier L.W."/>
            <person name="Zody M.C."/>
            <person name="Goldstein S."/>
            <person name="She X."/>
            <person name="Bult C.J."/>
            <person name="Agarwala R."/>
            <person name="Cherry J.L."/>
            <person name="DiCuccio M."/>
            <person name="Hlavina W."/>
            <person name="Kapustin Y."/>
            <person name="Meric P."/>
            <person name="Maglott D."/>
            <person name="Birtle Z."/>
            <person name="Marques A.C."/>
            <person name="Graves T."/>
            <person name="Zhou S."/>
            <person name="Teague B."/>
            <person name="Potamousis K."/>
            <person name="Churas C."/>
            <person name="Place M."/>
            <person name="Herschleb J."/>
            <person name="Runnheim R."/>
            <person name="Forrest D."/>
            <person name="Amos-Landgraf J."/>
            <person name="Schwartz D.C."/>
            <person name="Cheng Z."/>
            <person name="Lindblad-Toh K."/>
            <person name="Eichler E.E."/>
            <person name="Ponting C.P."/>
        </authorList>
    </citation>
    <scope>NUCLEOTIDE SEQUENCE [LARGE SCALE GENOMIC DNA]</scope>
    <source>
        <strain>C57BL/6J</strain>
    </source>
</reference>
<reference key="2">
    <citation type="journal article" date="2005" name="Science">
        <title>The transcriptional landscape of the mammalian genome.</title>
        <authorList>
            <person name="Carninci P."/>
            <person name="Kasukawa T."/>
            <person name="Katayama S."/>
            <person name="Gough J."/>
            <person name="Frith M.C."/>
            <person name="Maeda N."/>
            <person name="Oyama R."/>
            <person name="Ravasi T."/>
            <person name="Lenhard B."/>
            <person name="Wells C."/>
            <person name="Kodzius R."/>
            <person name="Shimokawa K."/>
            <person name="Bajic V.B."/>
            <person name="Brenner S.E."/>
            <person name="Batalov S."/>
            <person name="Forrest A.R."/>
            <person name="Zavolan M."/>
            <person name="Davis M.J."/>
            <person name="Wilming L.G."/>
            <person name="Aidinis V."/>
            <person name="Allen J.E."/>
            <person name="Ambesi-Impiombato A."/>
            <person name="Apweiler R."/>
            <person name="Aturaliya R.N."/>
            <person name="Bailey T.L."/>
            <person name="Bansal M."/>
            <person name="Baxter L."/>
            <person name="Beisel K.W."/>
            <person name="Bersano T."/>
            <person name="Bono H."/>
            <person name="Chalk A.M."/>
            <person name="Chiu K.P."/>
            <person name="Choudhary V."/>
            <person name="Christoffels A."/>
            <person name="Clutterbuck D.R."/>
            <person name="Crowe M.L."/>
            <person name="Dalla E."/>
            <person name="Dalrymple B.P."/>
            <person name="de Bono B."/>
            <person name="Della Gatta G."/>
            <person name="di Bernardo D."/>
            <person name="Down T."/>
            <person name="Engstrom P."/>
            <person name="Fagiolini M."/>
            <person name="Faulkner G."/>
            <person name="Fletcher C.F."/>
            <person name="Fukushima T."/>
            <person name="Furuno M."/>
            <person name="Futaki S."/>
            <person name="Gariboldi M."/>
            <person name="Georgii-Hemming P."/>
            <person name="Gingeras T.R."/>
            <person name="Gojobori T."/>
            <person name="Green R.E."/>
            <person name="Gustincich S."/>
            <person name="Harbers M."/>
            <person name="Hayashi Y."/>
            <person name="Hensch T.K."/>
            <person name="Hirokawa N."/>
            <person name="Hill D."/>
            <person name="Huminiecki L."/>
            <person name="Iacono M."/>
            <person name="Ikeo K."/>
            <person name="Iwama A."/>
            <person name="Ishikawa T."/>
            <person name="Jakt M."/>
            <person name="Kanapin A."/>
            <person name="Katoh M."/>
            <person name="Kawasawa Y."/>
            <person name="Kelso J."/>
            <person name="Kitamura H."/>
            <person name="Kitano H."/>
            <person name="Kollias G."/>
            <person name="Krishnan S.P."/>
            <person name="Kruger A."/>
            <person name="Kummerfeld S.K."/>
            <person name="Kurochkin I.V."/>
            <person name="Lareau L.F."/>
            <person name="Lazarevic D."/>
            <person name="Lipovich L."/>
            <person name="Liu J."/>
            <person name="Liuni S."/>
            <person name="McWilliam S."/>
            <person name="Madan Babu M."/>
            <person name="Madera M."/>
            <person name="Marchionni L."/>
            <person name="Matsuda H."/>
            <person name="Matsuzawa S."/>
            <person name="Miki H."/>
            <person name="Mignone F."/>
            <person name="Miyake S."/>
            <person name="Morris K."/>
            <person name="Mottagui-Tabar S."/>
            <person name="Mulder N."/>
            <person name="Nakano N."/>
            <person name="Nakauchi H."/>
            <person name="Ng P."/>
            <person name="Nilsson R."/>
            <person name="Nishiguchi S."/>
            <person name="Nishikawa S."/>
            <person name="Nori F."/>
            <person name="Ohara O."/>
            <person name="Okazaki Y."/>
            <person name="Orlando V."/>
            <person name="Pang K.C."/>
            <person name="Pavan W.J."/>
            <person name="Pavesi G."/>
            <person name="Pesole G."/>
            <person name="Petrovsky N."/>
            <person name="Piazza S."/>
            <person name="Reed J."/>
            <person name="Reid J.F."/>
            <person name="Ring B.Z."/>
            <person name="Ringwald M."/>
            <person name="Rost B."/>
            <person name="Ruan Y."/>
            <person name="Salzberg S.L."/>
            <person name="Sandelin A."/>
            <person name="Schneider C."/>
            <person name="Schoenbach C."/>
            <person name="Sekiguchi K."/>
            <person name="Semple C.A."/>
            <person name="Seno S."/>
            <person name="Sessa L."/>
            <person name="Sheng Y."/>
            <person name="Shibata Y."/>
            <person name="Shimada H."/>
            <person name="Shimada K."/>
            <person name="Silva D."/>
            <person name="Sinclair B."/>
            <person name="Sperling S."/>
            <person name="Stupka E."/>
            <person name="Sugiura K."/>
            <person name="Sultana R."/>
            <person name="Takenaka Y."/>
            <person name="Taki K."/>
            <person name="Tammoja K."/>
            <person name="Tan S.L."/>
            <person name="Tang S."/>
            <person name="Taylor M.S."/>
            <person name="Tegner J."/>
            <person name="Teichmann S.A."/>
            <person name="Ueda H.R."/>
            <person name="van Nimwegen E."/>
            <person name="Verardo R."/>
            <person name="Wei C.L."/>
            <person name="Yagi K."/>
            <person name="Yamanishi H."/>
            <person name="Zabarovsky E."/>
            <person name="Zhu S."/>
            <person name="Zimmer A."/>
            <person name="Hide W."/>
            <person name="Bult C."/>
            <person name="Grimmond S.M."/>
            <person name="Teasdale R.D."/>
            <person name="Liu E.T."/>
            <person name="Brusic V."/>
            <person name="Quackenbush J."/>
            <person name="Wahlestedt C."/>
            <person name="Mattick J.S."/>
            <person name="Hume D.A."/>
            <person name="Kai C."/>
            <person name="Sasaki D."/>
            <person name="Tomaru Y."/>
            <person name="Fukuda S."/>
            <person name="Kanamori-Katayama M."/>
            <person name="Suzuki M."/>
            <person name="Aoki J."/>
            <person name="Arakawa T."/>
            <person name="Iida J."/>
            <person name="Imamura K."/>
            <person name="Itoh M."/>
            <person name="Kato T."/>
            <person name="Kawaji H."/>
            <person name="Kawagashira N."/>
            <person name="Kawashima T."/>
            <person name="Kojima M."/>
            <person name="Kondo S."/>
            <person name="Konno H."/>
            <person name="Nakano K."/>
            <person name="Ninomiya N."/>
            <person name="Nishio T."/>
            <person name="Okada M."/>
            <person name="Plessy C."/>
            <person name="Shibata K."/>
            <person name="Shiraki T."/>
            <person name="Suzuki S."/>
            <person name="Tagami M."/>
            <person name="Waki K."/>
            <person name="Watahiki A."/>
            <person name="Okamura-Oho Y."/>
            <person name="Suzuki H."/>
            <person name="Kawai J."/>
            <person name="Hayashizaki Y."/>
        </authorList>
    </citation>
    <scope>NUCLEOTIDE SEQUENCE [LARGE SCALE MRNA] OF 48-456 (ISOFORM 1)</scope>
    <source>
        <tissue>Mammary gland</tissue>
    </source>
</reference>
<reference key="3">
    <citation type="journal article" date="2004" name="Genome Res.">
        <title>The status, quality, and expansion of the NIH full-length cDNA project: the Mammalian Gene Collection (MGC).</title>
        <authorList>
            <consortium name="The MGC Project Team"/>
        </authorList>
    </citation>
    <scope>NUCLEOTIDE SEQUENCE [LARGE SCALE MRNA] OF 318-773 (ISOFORM 2)</scope>
    <source>
        <strain>C57BL/6J</strain>
        <tissue>Brain</tissue>
    </source>
</reference>
<reference key="4">
    <citation type="journal article" date="2003" name="DNA Res.">
        <title>Prediction of the coding sequences of mouse homologues of KIAA gene: II. The complete nucleotide sequences of 400 mouse KIAA-homologous cDNAs identified by screening of terminal sequences of cDNA clones randomly sampled from size-fractionated libraries.</title>
        <authorList>
            <person name="Okazaki N."/>
            <person name="Kikuno R."/>
            <person name="Ohara R."/>
            <person name="Inamoto S."/>
            <person name="Aizawa H."/>
            <person name="Yuasa S."/>
            <person name="Nakajima D."/>
            <person name="Nagase T."/>
            <person name="Ohara O."/>
            <person name="Koga H."/>
        </authorList>
    </citation>
    <scope>NUCLEOTIDE SEQUENCE [LARGE SCALE MRNA] OF 496-773 (ISOFORM 3)</scope>
    <source>
        <tissue>Brain</tissue>
    </source>
</reference>